<comment type="function">
    <text evidence="1">The beta subunit is responsible for the synthesis of L-tryptophan from indole and L-serine.</text>
</comment>
<comment type="catalytic activity">
    <reaction evidence="1">
        <text>(1S,2R)-1-C-(indol-3-yl)glycerol 3-phosphate + L-serine = D-glyceraldehyde 3-phosphate + L-tryptophan + H2O</text>
        <dbReference type="Rhea" id="RHEA:10532"/>
        <dbReference type="ChEBI" id="CHEBI:15377"/>
        <dbReference type="ChEBI" id="CHEBI:33384"/>
        <dbReference type="ChEBI" id="CHEBI:57912"/>
        <dbReference type="ChEBI" id="CHEBI:58866"/>
        <dbReference type="ChEBI" id="CHEBI:59776"/>
        <dbReference type="EC" id="4.2.1.20"/>
    </reaction>
</comment>
<comment type="cofactor">
    <cofactor evidence="1">
        <name>pyridoxal 5'-phosphate</name>
        <dbReference type="ChEBI" id="CHEBI:597326"/>
    </cofactor>
</comment>
<comment type="pathway">
    <text evidence="1">Amino-acid biosynthesis; L-tryptophan biosynthesis; L-tryptophan from chorismate: step 5/5.</text>
</comment>
<comment type="subunit">
    <text evidence="1">Tetramer of two alpha and two beta chains.</text>
</comment>
<comment type="similarity">
    <text evidence="1">Belongs to the TrpB family.</text>
</comment>
<protein>
    <recommendedName>
        <fullName evidence="1">Tryptophan synthase beta chain</fullName>
        <ecNumber evidence="1">4.2.1.20</ecNumber>
    </recommendedName>
</protein>
<organism>
    <name type="scientific">Staphylococcus epidermidis (strain ATCC 12228 / FDA PCI 1200)</name>
    <dbReference type="NCBI Taxonomy" id="176280"/>
    <lineage>
        <taxon>Bacteria</taxon>
        <taxon>Bacillati</taxon>
        <taxon>Bacillota</taxon>
        <taxon>Bacilli</taxon>
        <taxon>Bacillales</taxon>
        <taxon>Staphylococcaceae</taxon>
        <taxon>Staphylococcus</taxon>
    </lineage>
</organism>
<reference key="1">
    <citation type="journal article" date="2003" name="Mol. Microbiol.">
        <title>Genome-based analysis of virulence genes in a non-biofilm-forming Staphylococcus epidermidis strain (ATCC 12228).</title>
        <authorList>
            <person name="Zhang Y.-Q."/>
            <person name="Ren S.-X."/>
            <person name="Li H.-L."/>
            <person name="Wang Y.-X."/>
            <person name="Fu G."/>
            <person name="Yang J."/>
            <person name="Qin Z.-Q."/>
            <person name="Miao Y.-G."/>
            <person name="Wang W.-Y."/>
            <person name="Chen R.-S."/>
            <person name="Shen Y."/>
            <person name="Chen Z."/>
            <person name="Yuan Z.-H."/>
            <person name="Zhao G.-P."/>
            <person name="Qu D."/>
            <person name="Danchin A."/>
            <person name="Wen Y.-M."/>
        </authorList>
    </citation>
    <scope>NUCLEOTIDE SEQUENCE [LARGE SCALE GENOMIC DNA]</scope>
    <source>
        <strain>ATCC 12228 / FDA PCI 1200</strain>
    </source>
</reference>
<gene>
    <name evidence="1" type="primary">trpB</name>
    <name type="ordered locus">SE_1053</name>
</gene>
<sequence length="402" mass="43834">MKIQTEVDELGFFGEYGGQYVPETLMPAIIELKKAYEDAKSDTHFKKEFNYYLSEYVGRETPLTFAESYTKLLGGAKIYLKREDLNHTGAHKINNAIGQALLAKRMGKTKLVAETGAGQHGVASATIAALFDMDLIVFMGSEDIKRQQLNVFRMELLGAKVVSVSDGQGTLSDAVNKALQYWVNHVEDTHYLLGSALGPDPFPTMVRDFQSVIGNEIKSQILSKEGRLPDALVACVGGGSNSIGTFYPFIQDDVKLYGVEAAGKGSHTHNHALAIGKGKPGVLHGSKMYLIQNDDGQIELAHSISAGLDYPGIGPEHSYYNDIGRVSYVSATDNEAMEALITFSKVEGIIPAIESAHALSYVEKLAPNMDEKEIIVVTISGRGDKDMETIKQYKENGGEQNE</sequence>
<dbReference type="EC" id="4.2.1.20" evidence="1"/>
<dbReference type="EMBL" id="AE015929">
    <property type="protein sequence ID" value="AAO04650.1"/>
    <property type="molecule type" value="Genomic_DNA"/>
</dbReference>
<dbReference type="RefSeq" id="NP_764608.1">
    <property type="nucleotide sequence ID" value="NC_004461.1"/>
</dbReference>
<dbReference type="RefSeq" id="WP_001831324.1">
    <property type="nucleotide sequence ID" value="NZ_WBME01000002.1"/>
</dbReference>
<dbReference type="SMR" id="Q8CPB1"/>
<dbReference type="GeneID" id="50018820"/>
<dbReference type="KEGG" id="sep:SE_1053"/>
<dbReference type="PATRIC" id="fig|176280.10.peg.1029"/>
<dbReference type="eggNOG" id="COG0133">
    <property type="taxonomic scope" value="Bacteria"/>
</dbReference>
<dbReference type="HOGENOM" id="CLU_016734_3_1_9"/>
<dbReference type="OrthoDB" id="9766131at2"/>
<dbReference type="UniPathway" id="UPA00035">
    <property type="reaction ID" value="UER00044"/>
</dbReference>
<dbReference type="Proteomes" id="UP000001411">
    <property type="component" value="Chromosome"/>
</dbReference>
<dbReference type="GO" id="GO:0005737">
    <property type="term" value="C:cytoplasm"/>
    <property type="evidence" value="ECO:0007669"/>
    <property type="project" value="TreeGrafter"/>
</dbReference>
<dbReference type="GO" id="GO:0004834">
    <property type="term" value="F:tryptophan synthase activity"/>
    <property type="evidence" value="ECO:0007669"/>
    <property type="project" value="UniProtKB-UniRule"/>
</dbReference>
<dbReference type="CDD" id="cd06446">
    <property type="entry name" value="Trp-synth_B"/>
    <property type="match status" value="1"/>
</dbReference>
<dbReference type="FunFam" id="3.40.50.1100:FF:000001">
    <property type="entry name" value="Tryptophan synthase beta chain"/>
    <property type="match status" value="1"/>
</dbReference>
<dbReference type="FunFam" id="3.40.50.1100:FF:000004">
    <property type="entry name" value="Tryptophan synthase beta chain"/>
    <property type="match status" value="1"/>
</dbReference>
<dbReference type="Gene3D" id="3.40.50.1100">
    <property type="match status" value="2"/>
</dbReference>
<dbReference type="HAMAP" id="MF_00133">
    <property type="entry name" value="Trp_synth_beta"/>
    <property type="match status" value="1"/>
</dbReference>
<dbReference type="InterPro" id="IPR006653">
    <property type="entry name" value="Trp_synth_b_CS"/>
</dbReference>
<dbReference type="InterPro" id="IPR006654">
    <property type="entry name" value="Trp_synth_beta"/>
</dbReference>
<dbReference type="InterPro" id="IPR023026">
    <property type="entry name" value="Trp_synth_beta/beta-like"/>
</dbReference>
<dbReference type="InterPro" id="IPR001926">
    <property type="entry name" value="TrpB-like_PALP"/>
</dbReference>
<dbReference type="InterPro" id="IPR036052">
    <property type="entry name" value="TrpB-like_PALP_sf"/>
</dbReference>
<dbReference type="NCBIfam" id="TIGR00263">
    <property type="entry name" value="trpB"/>
    <property type="match status" value="1"/>
</dbReference>
<dbReference type="PANTHER" id="PTHR48077:SF3">
    <property type="entry name" value="TRYPTOPHAN SYNTHASE"/>
    <property type="match status" value="1"/>
</dbReference>
<dbReference type="PANTHER" id="PTHR48077">
    <property type="entry name" value="TRYPTOPHAN SYNTHASE-RELATED"/>
    <property type="match status" value="1"/>
</dbReference>
<dbReference type="Pfam" id="PF00291">
    <property type="entry name" value="PALP"/>
    <property type="match status" value="1"/>
</dbReference>
<dbReference type="PIRSF" id="PIRSF001413">
    <property type="entry name" value="Trp_syn_beta"/>
    <property type="match status" value="1"/>
</dbReference>
<dbReference type="SUPFAM" id="SSF53686">
    <property type="entry name" value="Tryptophan synthase beta subunit-like PLP-dependent enzymes"/>
    <property type="match status" value="1"/>
</dbReference>
<dbReference type="PROSITE" id="PS00168">
    <property type="entry name" value="TRP_SYNTHASE_BETA"/>
    <property type="match status" value="1"/>
</dbReference>
<evidence type="ECO:0000255" key="1">
    <source>
        <dbReference type="HAMAP-Rule" id="MF_00133"/>
    </source>
</evidence>
<proteinExistence type="inferred from homology"/>
<keyword id="KW-0028">Amino-acid biosynthesis</keyword>
<keyword id="KW-0057">Aromatic amino acid biosynthesis</keyword>
<keyword id="KW-0456">Lyase</keyword>
<keyword id="KW-0663">Pyridoxal phosphate</keyword>
<keyword id="KW-0822">Tryptophan biosynthesis</keyword>
<accession>Q8CPB1</accession>
<feature type="chain" id="PRO_0000099003" description="Tryptophan synthase beta chain">
    <location>
        <begin position="1"/>
        <end position="402"/>
    </location>
</feature>
<feature type="modified residue" description="N6-(pyridoxal phosphate)lysine" evidence="1">
    <location>
        <position position="92"/>
    </location>
</feature>
<name>TRPB_STAES</name>